<name>NUOH_YERPA</name>
<protein>
    <recommendedName>
        <fullName evidence="1">NADH-quinone oxidoreductase subunit H</fullName>
        <ecNumber evidence="1">7.1.1.-</ecNumber>
    </recommendedName>
    <alternativeName>
        <fullName evidence="1">NADH dehydrogenase I subunit H</fullName>
    </alternativeName>
    <alternativeName>
        <fullName evidence="1">NDH-1 subunit H</fullName>
    </alternativeName>
</protein>
<organism>
    <name type="scientific">Yersinia pestis bv. Antiqua (strain Antiqua)</name>
    <dbReference type="NCBI Taxonomy" id="360102"/>
    <lineage>
        <taxon>Bacteria</taxon>
        <taxon>Pseudomonadati</taxon>
        <taxon>Pseudomonadota</taxon>
        <taxon>Gammaproteobacteria</taxon>
        <taxon>Enterobacterales</taxon>
        <taxon>Yersiniaceae</taxon>
        <taxon>Yersinia</taxon>
    </lineage>
</organism>
<sequence length="325" mass="36185">MSWFTPELIEILISVLKAVVILLVVVTCGAFMSFGERRLLGLFQNRYGPNRVGWGGSLQLVADMIKMFFKEDWVPRFSDRAIFTLAPVIAFTSLLLSFAIVPVSPTWAVADLNIGILFFLMMAGLAVYAVLFAGWASNNKYSLLGAMRASAQTLSYEVFLGLSLMGVVAQAGSFNMQDIVNSQEHVWNVIPQFFGFLTFAIAGVAVCHRHPFDQPEAEQELADGYHIEYSGMKFGLFFVGEYIGIVTVSALIVTLFFGGWQGPFLPPFIWFALKTAFFMVMFILIRASLPRPRYDQVMSFGWKVCLPLTLLNLLATAAVILYNAQ</sequence>
<proteinExistence type="inferred from homology"/>
<keyword id="KW-0997">Cell inner membrane</keyword>
<keyword id="KW-1003">Cell membrane</keyword>
<keyword id="KW-0472">Membrane</keyword>
<keyword id="KW-0520">NAD</keyword>
<keyword id="KW-0874">Quinone</keyword>
<keyword id="KW-1278">Translocase</keyword>
<keyword id="KW-0812">Transmembrane</keyword>
<keyword id="KW-1133">Transmembrane helix</keyword>
<keyword id="KW-0830">Ubiquinone</keyword>
<gene>
    <name evidence="1" type="primary">nuoH</name>
    <name type="ordered locus">YPA_2041</name>
</gene>
<accession>Q1C6B5</accession>
<feature type="chain" id="PRO_0000298859" description="NADH-quinone oxidoreductase subunit H">
    <location>
        <begin position="1"/>
        <end position="325"/>
    </location>
</feature>
<feature type="transmembrane region" description="Helical" evidence="1">
    <location>
        <begin position="11"/>
        <end position="31"/>
    </location>
</feature>
<feature type="transmembrane region" description="Helical" evidence="1">
    <location>
        <begin position="81"/>
        <end position="101"/>
    </location>
</feature>
<feature type="transmembrane region" description="Helical" evidence="1">
    <location>
        <begin position="114"/>
        <end position="134"/>
    </location>
</feature>
<feature type="transmembrane region" description="Helical" evidence="1">
    <location>
        <begin position="154"/>
        <end position="174"/>
    </location>
</feature>
<feature type="transmembrane region" description="Helical" evidence="1">
    <location>
        <begin position="186"/>
        <end position="206"/>
    </location>
</feature>
<feature type="transmembrane region" description="Helical" evidence="1">
    <location>
        <begin position="237"/>
        <end position="257"/>
    </location>
</feature>
<feature type="transmembrane region" description="Helical" evidence="1">
    <location>
        <begin position="265"/>
        <end position="285"/>
    </location>
</feature>
<feature type="transmembrane region" description="Helical" evidence="1">
    <location>
        <begin position="304"/>
        <end position="324"/>
    </location>
</feature>
<reference key="1">
    <citation type="journal article" date="2006" name="J. Bacteriol.">
        <title>Complete genome sequence of Yersinia pestis strains Antiqua and Nepal516: evidence of gene reduction in an emerging pathogen.</title>
        <authorList>
            <person name="Chain P.S.G."/>
            <person name="Hu P."/>
            <person name="Malfatti S.A."/>
            <person name="Radnedge L."/>
            <person name="Larimer F."/>
            <person name="Vergez L.M."/>
            <person name="Worsham P."/>
            <person name="Chu M.C."/>
            <person name="Andersen G.L."/>
        </authorList>
    </citation>
    <scope>NUCLEOTIDE SEQUENCE [LARGE SCALE GENOMIC DNA]</scope>
    <source>
        <strain>Antiqua</strain>
    </source>
</reference>
<dbReference type="EC" id="7.1.1.-" evidence="1"/>
<dbReference type="EMBL" id="CP000308">
    <property type="protein sequence ID" value="ABG14007.1"/>
    <property type="molecule type" value="Genomic_DNA"/>
</dbReference>
<dbReference type="RefSeq" id="WP_002210274.1">
    <property type="nucleotide sequence ID" value="NZ_CP009906.1"/>
</dbReference>
<dbReference type="SMR" id="Q1C6B5"/>
<dbReference type="GeneID" id="96666080"/>
<dbReference type="KEGG" id="ypa:YPA_2041"/>
<dbReference type="Proteomes" id="UP000001971">
    <property type="component" value="Chromosome"/>
</dbReference>
<dbReference type="GO" id="GO:0005886">
    <property type="term" value="C:plasma membrane"/>
    <property type="evidence" value="ECO:0007669"/>
    <property type="project" value="UniProtKB-SubCell"/>
</dbReference>
<dbReference type="GO" id="GO:0003954">
    <property type="term" value="F:NADH dehydrogenase activity"/>
    <property type="evidence" value="ECO:0007669"/>
    <property type="project" value="TreeGrafter"/>
</dbReference>
<dbReference type="GO" id="GO:0016655">
    <property type="term" value="F:oxidoreductase activity, acting on NAD(P)H, quinone or similar compound as acceptor"/>
    <property type="evidence" value="ECO:0007669"/>
    <property type="project" value="UniProtKB-UniRule"/>
</dbReference>
<dbReference type="GO" id="GO:0048038">
    <property type="term" value="F:quinone binding"/>
    <property type="evidence" value="ECO:0007669"/>
    <property type="project" value="UniProtKB-KW"/>
</dbReference>
<dbReference type="GO" id="GO:0009060">
    <property type="term" value="P:aerobic respiration"/>
    <property type="evidence" value="ECO:0007669"/>
    <property type="project" value="TreeGrafter"/>
</dbReference>
<dbReference type="HAMAP" id="MF_01350">
    <property type="entry name" value="NDH1_NuoH"/>
    <property type="match status" value="1"/>
</dbReference>
<dbReference type="InterPro" id="IPR001694">
    <property type="entry name" value="NADH_UbQ_OxRdtase_su1/FPO"/>
</dbReference>
<dbReference type="InterPro" id="IPR018086">
    <property type="entry name" value="NADH_UbQ_OxRdtase_su1_CS"/>
</dbReference>
<dbReference type="NCBIfam" id="NF004740">
    <property type="entry name" value="PRK06076.1-1"/>
    <property type="match status" value="1"/>
</dbReference>
<dbReference type="NCBIfam" id="NF004741">
    <property type="entry name" value="PRK06076.1-2"/>
    <property type="match status" value="1"/>
</dbReference>
<dbReference type="PANTHER" id="PTHR11432">
    <property type="entry name" value="NADH DEHYDROGENASE SUBUNIT 1"/>
    <property type="match status" value="1"/>
</dbReference>
<dbReference type="PANTHER" id="PTHR11432:SF3">
    <property type="entry name" value="NADH-UBIQUINONE OXIDOREDUCTASE CHAIN 1"/>
    <property type="match status" value="1"/>
</dbReference>
<dbReference type="Pfam" id="PF00146">
    <property type="entry name" value="NADHdh"/>
    <property type="match status" value="1"/>
</dbReference>
<dbReference type="PROSITE" id="PS00667">
    <property type="entry name" value="COMPLEX1_ND1_1"/>
    <property type="match status" value="1"/>
</dbReference>
<dbReference type="PROSITE" id="PS00668">
    <property type="entry name" value="COMPLEX1_ND1_2"/>
    <property type="match status" value="1"/>
</dbReference>
<evidence type="ECO:0000255" key="1">
    <source>
        <dbReference type="HAMAP-Rule" id="MF_01350"/>
    </source>
</evidence>
<comment type="function">
    <text evidence="1">NDH-1 shuttles electrons from NADH, via FMN and iron-sulfur (Fe-S) centers, to quinones in the respiratory chain. The immediate electron acceptor for the enzyme in this species is believed to be ubiquinone. Couples the redox reaction to proton translocation (for every two electrons transferred, four hydrogen ions are translocated across the cytoplasmic membrane), and thus conserves the redox energy in a proton gradient. This subunit may bind ubiquinone.</text>
</comment>
<comment type="catalytic activity">
    <reaction evidence="1">
        <text>a quinone + NADH + 5 H(+)(in) = a quinol + NAD(+) + 4 H(+)(out)</text>
        <dbReference type="Rhea" id="RHEA:57888"/>
        <dbReference type="ChEBI" id="CHEBI:15378"/>
        <dbReference type="ChEBI" id="CHEBI:24646"/>
        <dbReference type="ChEBI" id="CHEBI:57540"/>
        <dbReference type="ChEBI" id="CHEBI:57945"/>
        <dbReference type="ChEBI" id="CHEBI:132124"/>
    </reaction>
</comment>
<comment type="subunit">
    <text evidence="1">NDH-1 is composed of 13 different subunits. Subunits NuoA, H, J, K, L, M, N constitute the membrane sector of the complex.</text>
</comment>
<comment type="subcellular location">
    <subcellularLocation>
        <location evidence="1">Cell inner membrane</location>
        <topology evidence="1">Multi-pass membrane protein</topology>
    </subcellularLocation>
</comment>
<comment type="similarity">
    <text evidence="1">Belongs to the complex I subunit 1 family.</text>
</comment>